<evidence type="ECO:0000250" key="1">
    <source>
        <dbReference type="UniProtKB" id="P25524"/>
    </source>
</evidence>
<evidence type="ECO:0000269" key="2">
    <source>
    </source>
</evidence>
<evidence type="ECO:0000303" key="3">
    <source>
    </source>
</evidence>
<evidence type="ECO:0000305" key="4"/>
<evidence type="ECO:0000305" key="5">
    <source>
    </source>
</evidence>
<evidence type="ECO:0000312" key="6">
    <source>
        <dbReference type="EMBL" id="ACM27458.1"/>
    </source>
</evidence>
<proteinExistence type="evidence at protein level"/>
<reference key="1">
    <citation type="journal article" date="2009" name="J. Bacteriol.">
        <title>Genome sequences of three Agrobacterium biovars help elucidate the evolution of multichromosome genomes in bacteria.</title>
        <authorList>
            <person name="Slater S.C."/>
            <person name="Goldman B.S."/>
            <person name="Goodner B."/>
            <person name="Setubal J.C."/>
            <person name="Farrand S.K."/>
            <person name="Nester E.W."/>
            <person name="Burr T.J."/>
            <person name="Banta L."/>
            <person name="Dickerman A.W."/>
            <person name="Paulsen I."/>
            <person name="Otten L."/>
            <person name="Suen G."/>
            <person name="Welch R."/>
            <person name="Almeida N.F."/>
            <person name="Arnold F."/>
            <person name="Burton O.T."/>
            <person name="Du Z."/>
            <person name="Ewing A."/>
            <person name="Godsy E."/>
            <person name="Heisel S."/>
            <person name="Houmiel K.L."/>
            <person name="Jhaveri J."/>
            <person name="Lu J."/>
            <person name="Miller N.M."/>
            <person name="Norton S."/>
            <person name="Chen Q."/>
            <person name="Phoolcharoen W."/>
            <person name="Ohlin V."/>
            <person name="Ondrusek D."/>
            <person name="Pride N."/>
            <person name="Stricklin S.L."/>
            <person name="Sun J."/>
            <person name="Wheeler C."/>
            <person name="Wilson L."/>
            <person name="Zhu H."/>
            <person name="Wood D.W."/>
        </authorList>
    </citation>
    <scope>NUCLEOTIDE SEQUENCE [LARGE SCALE GENOMIC DNA]</scope>
    <source>
        <strain>K84 / ATCC BAA-868</strain>
    </source>
</reference>
<reference key="2">
    <citation type="journal article" date="2013" name="J. Am. Chem. Soc.">
        <title>Assignment of pterin deaminase activity to an enzyme of unknown function guided by homology modeling and docking.</title>
        <authorList>
            <person name="Fan H."/>
            <person name="Hitchcock D.S."/>
            <person name="Seidel R.D. II"/>
            <person name="Hillerich B."/>
            <person name="Lin H."/>
            <person name="Almo S.C."/>
            <person name="Sali A."/>
            <person name="Shoichet B.K."/>
            <person name="Raushel F.M."/>
        </authorList>
    </citation>
    <scope>FUNCTION</scope>
    <scope>CATALYTIC ACTIVITY</scope>
    <scope>SUBSTRATE SPECIFICITY</scope>
    <scope>BIOPHYSICOCHEMICAL PROPERTIES</scope>
    <scope>HOMOLOGY MODELING</scope>
    <scope>MOLECULAR DOCKING</scope>
    <source>
        <strain>K84 / ATCC BAA-868</strain>
    </source>
</reference>
<accession>B9J8S0</accession>
<protein>
    <recommendedName>
        <fullName evidence="3">Pterin deaminase</fullName>
        <shortName evidence="3">PDA</shortName>
        <ecNumber evidence="2">3.5.4.11</ecNumber>
    </recommendedName>
</protein>
<feature type="chain" id="PRO_0000431902" description="Pterin deaminase">
    <location>
        <begin position="1"/>
        <end position="437"/>
    </location>
</feature>
<feature type="active site" description="Proton donor" evidence="5">
    <location>
        <position position="234"/>
    </location>
</feature>
<feature type="binding site" evidence="1">
    <location>
        <position position="80"/>
    </location>
    <ligand>
        <name>a divalent metal cation</name>
        <dbReference type="ChEBI" id="CHEBI:60240"/>
        <note>catalytic</note>
    </ligand>
</feature>
<feature type="binding site" evidence="1">
    <location>
        <position position="82"/>
    </location>
    <ligand>
        <name>a divalent metal cation</name>
        <dbReference type="ChEBI" id="CHEBI:60240"/>
        <note>catalytic</note>
    </ligand>
</feature>
<feature type="binding site" evidence="5">
    <location>
        <position position="85"/>
    </location>
    <ligand>
        <name>substrate</name>
    </ligand>
</feature>
<feature type="binding site" evidence="1">
    <location>
        <position position="231"/>
    </location>
    <ligand>
        <name>a divalent metal cation</name>
        <dbReference type="ChEBI" id="CHEBI:60240"/>
        <note>catalytic</note>
    </ligand>
</feature>
<feature type="binding site" evidence="5">
    <location>
        <begin position="331"/>
        <end position="332"/>
    </location>
    <ligand>
        <name>substrate</name>
    </ligand>
</feature>
<feature type="binding site" evidence="1">
    <location>
        <position position="331"/>
    </location>
    <ligand>
        <name>a divalent metal cation</name>
        <dbReference type="ChEBI" id="CHEBI:60240"/>
        <note>catalytic</note>
    </ligand>
</feature>
<feature type="site" description="Activates the nucleophilic water" evidence="1">
    <location>
        <position position="263"/>
    </location>
</feature>
<gene>
    <name evidence="6" type="primary">codAch2</name>
    <name evidence="6" type="ordered locus">Arad_3529</name>
</gene>
<sequence length="437" mass="47425">MSYSFMSPPNAARFVLSNATVPAVTVVGFTGPSSEGLMKADIVVADGLIKDILPAGTAPAELAKADMRDGMVWPTFADMHTHLDKGHIWERRANPDGSFMGALDAVRSDREANWSAADVRKRMEFSLRAAYAHGTSLIRTHLDSLAPQHRISFEVFSEVREAWKDKIALQAVALFPLDFMVDDAFFADLTTVVREAGGLLGGVTQMNPDIDAQLDKLIRAAAANGLDIDLHVDETEDREVLTLKAIAAAVLRNGFTGKVTAGHCCSLARQDENVAAATIDLVAKAGISIVALPMCNMYLQDRHPGRTPRWRGVTLLHELAAAGVPTAVASDNTRDPFYAYGDLDPVEVFREAVRILHLDHPLDTAARVVTTSPASILGRPDIGRIAVGGPADLVLFSARRWSEFLSRPQSDRVVLRKGKVIDRSLPDYRELDTVIGA</sequence>
<keyword id="KW-0378">Hydrolase</keyword>
<keyword id="KW-0479">Metal-binding</keyword>
<dbReference type="EC" id="3.5.4.11" evidence="2"/>
<dbReference type="EMBL" id="CP000628">
    <property type="protein sequence ID" value="ACM27458.1"/>
    <property type="molecule type" value="Genomic_DNA"/>
</dbReference>
<dbReference type="RefSeq" id="WP_012652141.1">
    <property type="nucleotide sequence ID" value="NC_011985.1"/>
</dbReference>
<dbReference type="SMR" id="B9J8S0"/>
<dbReference type="STRING" id="311403.Arad_3529"/>
<dbReference type="GeneID" id="86849341"/>
<dbReference type="KEGG" id="ara:Arad_3529"/>
<dbReference type="eggNOG" id="COG0402">
    <property type="taxonomic scope" value="Bacteria"/>
</dbReference>
<dbReference type="HOGENOM" id="CLU_031758_5_1_5"/>
<dbReference type="SABIO-RK" id="B9J8S0"/>
<dbReference type="Proteomes" id="UP000001600">
    <property type="component" value="Chromosome 1"/>
</dbReference>
<dbReference type="GO" id="GO:0004131">
    <property type="term" value="F:cytosine deaminase activity"/>
    <property type="evidence" value="ECO:0007669"/>
    <property type="project" value="TreeGrafter"/>
</dbReference>
<dbReference type="GO" id="GO:0035888">
    <property type="term" value="F:isoguanine deaminase activity"/>
    <property type="evidence" value="ECO:0007669"/>
    <property type="project" value="TreeGrafter"/>
</dbReference>
<dbReference type="GO" id="GO:0046872">
    <property type="term" value="F:metal ion binding"/>
    <property type="evidence" value="ECO:0007669"/>
    <property type="project" value="UniProtKB-KW"/>
</dbReference>
<dbReference type="GO" id="GO:0050228">
    <property type="term" value="F:pterin deaminase activity"/>
    <property type="evidence" value="ECO:0000314"/>
    <property type="project" value="UniProtKB"/>
</dbReference>
<dbReference type="GO" id="GO:0050279">
    <property type="term" value="F:sepiapterin deaminase activity"/>
    <property type="evidence" value="ECO:0000314"/>
    <property type="project" value="CACAO"/>
</dbReference>
<dbReference type="GO" id="GO:0006209">
    <property type="term" value="P:cytosine catabolic process"/>
    <property type="evidence" value="ECO:0007669"/>
    <property type="project" value="TreeGrafter"/>
</dbReference>
<dbReference type="CDD" id="cd01293">
    <property type="entry name" value="Bact_CD"/>
    <property type="match status" value="1"/>
</dbReference>
<dbReference type="FunFam" id="3.20.20.140:FF:000019">
    <property type="entry name" value="Cytosine deaminase"/>
    <property type="match status" value="1"/>
</dbReference>
<dbReference type="Gene3D" id="3.20.20.140">
    <property type="entry name" value="Metal-dependent hydrolases"/>
    <property type="match status" value="1"/>
</dbReference>
<dbReference type="Gene3D" id="2.30.40.10">
    <property type="entry name" value="Urease, subunit C, domain 1"/>
    <property type="match status" value="1"/>
</dbReference>
<dbReference type="InterPro" id="IPR013108">
    <property type="entry name" value="Amidohydro_3"/>
</dbReference>
<dbReference type="InterPro" id="IPR011059">
    <property type="entry name" value="Metal-dep_hydrolase_composite"/>
</dbReference>
<dbReference type="InterPro" id="IPR032466">
    <property type="entry name" value="Metal_Hydrolase"/>
</dbReference>
<dbReference type="InterPro" id="IPR052349">
    <property type="entry name" value="Metallo-hydrolase_Enzymes"/>
</dbReference>
<dbReference type="NCBIfam" id="NF005759">
    <property type="entry name" value="PRK07583.1"/>
    <property type="match status" value="1"/>
</dbReference>
<dbReference type="PANTHER" id="PTHR32027">
    <property type="entry name" value="CYTOSINE DEAMINASE"/>
    <property type="match status" value="1"/>
</dbReference>
<dbReference type="PANTHER" id="PTHR32027:SF0">
    <property type="entry name" value="CYTOSINE DEAMINASE"/>
    <property type="match status" value="1"/>
</dbReference>
<dbReference type="Pfam" id="PF07969">
    <property type="entry name" value="Amidohydro_3"/>
    <property type="match status" value="1"/>
</dbReference>
<dbReference type="SUPFAM" id="SSF51338">
    <property type="entry name" value="Composite domain of metallo-dependent hydrolases"/>
    <property type="match status" value="1"/>
</dbReference>
<dbReference type="SUPFAM" id="SSF51556">
    <property type="entry name" value="Metallo-dependent hydrolases"/>
    <property type="match status" value="1"/>
</dbReference>
<organism>
    <name type="scientific">Rhizobium rhizogenes (strain K84 / ATCC BAA-868)</name>
    <name type="common">Agrobacterium radiobacter</name>
    <dbReference type="NCBI Taxonomy" id="311403"/>
    <lineage>
        <taxon>Bacteria</taxon>
        <taxon>Pseudomonadati</taxon>
        <taxon>Pseudomonadota</taxon>
        <taxon>Alphaproteobacteria</taxon>
        <taxon>Hyphomicrobiales</taxon>
        <taxon>Rhizobiaceae</taxon>
        <taxon>Rhizobium/Agrobacterium group</taxon>
        <taxon>Rhizobium</taxon>
    </lineage>
</organism>
<comment type="function">
    <text evidence="2">Catalyzes the deamination of many pterin metabolites, such as formylpterin, pterin-6-carboxylate, pterin-7-carboxylate, pterin, hydroxymethylpterin, biopterin, D-(+)-neopterin, isoxanthopterin, sepiapterin, folate, xanthopterin, and 7,8-dihydrohydroxymethylpterin. May be involved in a degradative pathway for catabolizing pterin rings.</text>
</comment>
<comment type="catalytic activity">
    <reaction evidence="2">
        <text>a 2-amino-4-hydroxypteridine + H2O + H(+) = a 2,4-dihydroxypteridine + NH4(+)</text>
        <dbReference type="Rhea" id="RHEA:36055"/>
        <dbReference type="ChEBI" id="CHEBI:15377"/>
        <dbReference type="ChEBI" id="CHEBI:15378"/>
        <dbReference type="ChEBI" id="CHEBI:28938"/>
        <dbReference type="ChEBI" id="CHEBI:73184"/>
        <dbReference type="ChEBI" id="CHEBI:73186"/>
        <dbReference type="EC" id="3.5.4.11"/>
    </reaction>
</comment>
<comment type="catalytic activity">
    <reaction evidence="2">
        <text>L-sepiapterin + H2O + H(+) = (S)-xanthopterin-B2 + NH4(+)</text>
        <dbReference type="Rhea" id="RHEA:14025"/>
        <dbReference type="ChEBI" id="CHEBI:15377"/>
        <dbReference type="ChEBI" id="CHEBI:15378"/>
        <dbReference type="ChEBI" id="CHEBI:28938"/>
        <dbReference type="ChEBI" id="CHEBI:194527"/>
        <dbReference type="ChEBI" id="CHEBI:233231"/>
    </reaction>
</comment>
<comment type="cofactor">
    <cofactor evidence="1">
        <name>a divalent metal cation</name>
        <dbReference type="ChEBI" id="CHEBI:60240"/>
    </cofactor>
</comment>
<comment type="biophysicochemical properties">
    <kinetics>
        <KM evidence="2">12 uM for formylpterin</KM>
        <KM evidence="2">27 uM for pterin-6-carboxylate</KM>
        <KM evidence="2">13 uM for pterin-7-carboxylate</KM>
        <KM evidence="2">39 uM for pterin</KM>
        <KM evidence="2">23 uM for hydroxymethylpterin</KM>
        <KM evidence="2">47 uM for biopterin</KM>
        <KM evidence="2">61 uM for D-(+)-neopterin</KM>
        <KM evidence="2">5.7 uM for isoxanthopterin</KM>
        <KM evidence="2">22 uM for sepiapterin</KM>
        <KM evidence="2">50 uM for folate</KM>
        <KM evidence="2">40 uM for xanthopterin</KM>
        <KM evidence="2">37 uM for 7,8-dihydro-hydroxymethylpterin</KM>
        <KM evidence="2">200 uM for 7,8-dihydroneopterin</KM>
        <KM evidence="2">93 uM for 7,8-dihydrobiopterin</KM>
        <text evidence="2">kcat is 64 sec(-1) with formylpterin as substrate. kcat is 110 sec(-1) with pterin-6-carboxylate as substrate. kcat is 48 sec(-1) with pterin-7-carboxylate as substrate. kcat is 131 sec(-1) with pterin as substrate. kcat is 28 sec(-1) with hydroxymethylpterin as substrate. kcat is 46 sec(-1) with biopterin as substrate. kcat is 19 sec(-1) with D-(+)-neopterin as substrate. kcat is 1.6 sec(-1) with isoxanthopterin as substrate. kcat is 2.9 sec(-1) with sepiapterin as substrate. kcat is 6.4 sec(-1) with folate as substrate. kcat is 0.46 sec(-1) with xanthopterin as substrate. kcat is 1.2 sec(-1) with 7,8-dihydro-hydroxymethylpterin as substrate. kcat is 0.036 sec(-1) with 7,8-dihydroneopterin as substrate. kcat is 0.090 sec(-1) with 7,8-dihydrobiopterin as substrate.</text>
    </kinetics>
</comment>
<comment type="similarity">
    <text evidence="4">Belongs to the metallo-dependent hydrolases superfamily. Pterin deaminase family.</text>
</comment>
<name>PDA_RHIR8</name>